<sequence length="218" mass="22310">MPGRQRRDGGSGPAGQNGPNTGDNRGGGDRRGGGRDDRRGGQSAEKSNHIERVVTINRVSKVVKGGRRFSFTALVIVGDGNGLVGVGYGKAKEVPAAIQKGVEEARKSFFRVPMIGSTITHPVQGEAAAGVVMLRPASPGTGVIAGGAVRAVLECAGIHDILSKSLGSDNAINVVHATVAALKGLQRPEEVAARRGLALEDVAPAGMLRARAQAGSVK</sequence>
<comment type="function">
    <text evidence="1">With S4 and S12 plays an important role in translational accuracy.</text>
</comment>
<comment type="function">
    <text evidence="1">Located at the back of the 30S subunit body where it stabilizes the conformation of the head with respect to the body.</text>
</comment>
<comment type="subunit">
    <text evidence="1">Part of the 30S ribosomal subunit. Contacts proteins S4 and S8.</text>
</comment>
<comment type="domain">
    <text>The N-terminal domain interacts with the head of the 30S subunit; the C-terminal domain interacts with the body and contacts protein S4. The interaction surface between S4 and S5 is involved in control of translational fidelity.</text>
</comment>
<comment type="similarity">
    <text evidence="1">Belongs to the universal ribosomal protein uS5 family.</text>
</comment>
<keyword id="KW-0687">Ribonucleoprotein</keyword>
<keyword id="KW-0689">Ribosomal protein</keyword>
<keyword id="KW-0694">RNA-binding</keyword>
<keyword id="KW-0699">rRNA-binding</keyword>
<evidence type="ECO:0000255" key="1">
    <source>
        <dbReference type="HAMAP-Rule" id="MF_01307"/>
    </source>
</evidence>
<evidence type="ECO:0000256" key="2">
    <source>
        <dbReference type="SAM" id="MobiDB-lite"/>
    </source>
</evidence>
<evidence type="ECO:0000305" key="3"/>
<accession>C1B029</accession>
<feature type="chain" id="PRO_1000165462" description="Small ribosomal subunit protein uS5">
    <location>
        <begin position="1"/>
        <end position="218"/>
    </location>
</feature>
<feature type="domain" description="S5 DRBM" evidence="1">
    <location>
        <begin position="49"/>
        <end position="112"/>
    </location>
</feature>
<feature type="region of interest" description="Disordered" evidence="2">
    <location>
        <begin position="1"/>
        <end position="49"/>
    </location>
</feature>
<feature type="compositionally biased region" description="Basic and acidic residues" evidence="2">
    <location>
        <begin position="26"/>
        <end position="49"/>
    </location>
</feature>
<organism>
    <name type="scientific">Rhodococcus opacus (strain B4)</name>
    <dbReference type="NCBI Taxonomy" id="632772"/>
    <lineage>
        <taxon>Bacteria</taxon>
        <taxon>Bacillati</taxon>
        <taxon>Actinomycetota</taxon>
        <taxon>Actinomycetes</taxon>
        <taxon>Mycobacteriales</taxon>
        <taxon>Nocardiaceae</taxon>
        <taxon>Rhodococcus</taxon>
    </lineage>
</organism>
<gene>
    <name evidence="1" type="primary">rpsE</name>
    <name type="ordered locus">ROP_62030</name>
</gene>
<reference key="1">
    <citation type="submission" date="2009-03" db="EMBL/GenBank/DDBJ databases">
        <title>Comparison of the complete genome sequences of Rhodococcus erythropolis PR4 and Rhodococcus opacus B4.</title>
        <authorList>
            <person name="Takarada H."/>
            <person name="Sekine M."/>
            <person name="Hosoyama A."/>
            <person name="Yamada R."/>
            <person name="Fujisawa T."/>
            <person name="Omata S."/>
            <person name="Shimizu A."/>
            <person name="Tsukatani N."/>
            <person name="Tanikawa S."/>
            <person name="Fujita N."/>
            <person name="Harayama S."/>
        </authorList>
    </citation>
    <scope>NUCLEOTIDE SEQUENCE [LARGE SCALE GENOMIC DNA]</scope>
    <source>
        <strain>B4</strain>
    </source>
</reference>
<name>RS5_RHOOB</name>
<protein>
    <recommendedName>
        <fullName evidence="1">Small ribosomal subunit protein uS5</fullName>
    </recommendedName>
    <alternativeName>
        <fullName evidence="3">30S ribosomal protein S5</fullName>
    </alternativeName>
</protein>
<dbReference type="EMBL" id="AP011115">
    <property type="protein sequence ID" value="BAH54450.1"/>
    <property type="molecule type" value="Genomic_DNA"/>
</dbReference>
<dbReference type="RefSeq" id="WP_005253858.1">
    <property type="nucleotide sequence ID" value="NC_012522.1"/>
</dbReference>
<dbReference type="SMR" id="C1B029"/>
<dbReference type="STRING" id="632772.ROP_62030"/>
<dbReference type="KEGG" id="rop:ROP_62030"/>
<dbReference type="PATRIC" id="fig|632772.20.peg.6479"/>
<dbReference type="HOGENOM" id="CLU_065898_2_1_11"/>
<dbReference type="OrthoDB" id="9809045at2"/>
<dbReference type="Proteomes" id="UP000002212">
    <property type="component" value="Chromosome"/>
</dbReference>
<dbReference type="GO" id="GO:0015935">
    <property type="term" value="C:small ribosomal subunit"/>
    <property type="evidence" value="ECO:0007669"/>
    <property type="project" value="InterPro"/>
</dbReference>
<dbReference type="GO" id="GO:0019843">
    <property type="term" value="F:rRNA binding"/>
    <property type="evidence" value="ECO:0007669"/>
    <property type="project" value="UniProtKB-UniRule"/>
</dbReference>
<dbReference type="GO" id="GO:0003735">
    <property type="term" value="F:structural constituent of ribosome"/>
    <property type="evidence" value="ECO:0007669"/>
    <property type="project" value="InterPro"/>
</dbReference>
<dbReference type="GO" id="GO:0006412">
    <property type="term" value="P:translation"/>
    <property type="evidence" value="ECO:0007669"/>
    <property type="project" value="UniProtKB-UniRule"/>
</dbReference>
<dbReference type="FunFam" id="3.30.160.20:FF:000001">
    <property type="entry name" value="30S ribosomal protein S5"/>
    <property type="match status" value="1"/>
</dbReference>
<dbReference type="FunFam" id="3.30.230.10:FF:000002">
    <property type="entry name" value="30S ribosomal protein S5"/>
    <property type="match status" value="1"/>
</dbReference>
<dbReference type="Gene3D" id="3.30.160.20">
    <property type="match status" value="1"/>
</dbReference>
<dbReference type="Gene3D" id="3.30.230.10">
    <property type="match status" value="1"/>
</dbReference>
<dbReference type="HAMAP" id="MF_01307_B">
    <property type="entry name" value="Ribosomal_uS5_B"/>
    <property type="match status" value="1"/>
</dbReference>
<dbReference type="InterPro" id="IPR020568">
    <property type="entry name" value="Ribosomal_Su5_D2-typ_SF"/>
</dbReference>
<dbReference type="InterPro" id="IPR000851">
    <property type="entry name" value="Ribosomal_uS5"/>
</dbReference>
<dbReference type="InterPro" id="IPR005712">
    <property type="entry name" value="Ribosomal_uS5_bac-type"/>
</dbReference>
<dbReference type="InterPro" id="IPR005324">
    <property type="entry name" value="Ribosomal_uS5_C"/>
</dbReference>
<dbReference type="InterPro" id="IPR013810">
    <property type="entry name" value="Ribosomal_uS5_N"/>
</dbReference>
<dbReference type="InterPro" id="IPR018192">
    <property type="entry name" value="Ribosomal_uS5_N_CS"/>
</dbReference>
<dbReference type="InterPro" id="IPR014721">
    <property type="entry name" value="Ribsml_uS5_D2-typ_fold_subgr"/>
</dbReference>
<dbReference type="NCBIfam" id="TIGR01021">
    <property type="entry name" value="rpsE_bact"/>
    <property type="match status" value="1"/>
</dbReference>
<dbReference type="PANTHER" id="PTHR48277">
    <property type="entry name" value="MITOCHONDRIAL RIBOSOMAL PROTEIN S5"/>
    <property type="match status" value="1"/>
</dbReference>
<dbReference type="PANTHER" id="PTHR48277:SF1">
    <property type="entry name" value="MITOCHONDRIAL RIBOSOMAL PROTEIN S5"/>
    <property type="match status" value="1"/>
</dbReference>
<dbReference type="Pfam" id="PF00333">
    <property type="entry name" value="Ribosomal_S5"/>
    <property type="match status" value="1"/>
</dbReference>
<dbReference type="Pfam" id="PF03719">
    <property type="entry name" value="Ribosomal_S5_C"/>
    <property type="match status" value="1"/>
</dbReference>
<dbReference type="SUPFAM" id="SSF54768">
    <property type="entry name" value="dsRNA-binding domain-like"/>
    <property type="match status" value="1"/>
</dbReference>
<dbReference type="SUPFAM" id="SSF54211">
    <property type="entry name" value="Ribosomal protein S5 domain 2-like"/>
    <property type="match status" value="1"/>
</dbReference>
<dbReference type="PROSITE" id="PS00585">
    <property type="entry name" value="RIBOSOMAL_S5"/>
    <property type="match status" value="1"/>
</dbReference>
<dbReference type="PROSITE" id="PS50881">
    <property type="entry name" value="S5_DSRBD"/>
    <property type="match status" value="1"/>
</dbReference>
<proteinExistence type="inferred from homology"/>